<comment type="function">
    <text evidence="2">Alpha-toxins act on postsynaptic membranes, they bind to the nicotinic acetylcholine receptors (nAChR) and thus inhibit them. This toxin very weakly competes with alpha-bungarotoxin for binding to orthosteric sites on muscle-type T.carlifornicus (IC(50)=14.95 uM) and human alpha-7/CHRNA7 nAChRs (IC(50)&gt;45 uM).</text>
</comment>
<comment type="subcellular location">
    <subcellularLocation>
        <location evidence="2">Secreted</location>
    </subcellularLocation>
    <subcellularLocation>
        <location evidence="4">Nematocyst</location>
    </subcellularLocation>
</comment>
<comment type="domain">
    <text evidence="4">The presence of a 'disulfide through disulfide knot' structurally defines this protein as a knottin.</text>
</comment>
<comment type="mass spectrometry" mass="3274.8" method="MALDI" evidence="2"/>
<comment type="miscellaneous">
    <text evidence="2">Negative results: does not show activity on rat TRPV1, human TRPV3, rat TRPA1 channels, the human ghrelin receptor, human neurotensin receptor 1, rat ASIC1a and ASIC3 channels.</text>
</comment>
<evidence type="ECO:0000255" key="1"/>
<evidence type="ECO:0000269" key="2">
    <source>
    </source>
</evidence>
<evidence type="ECO:0000303" key="3">
    <source>
    </source>
</evidence>
<evidence type="ECO:0000305" key="4"/>
<evidence type="ECO:0000305" key="5">
    <source>
    </source>
</evidence>
<dbReference type="EMBL" id="ON605616">
    <property type="protein sequence ID" value="WCB99798.1"/>
    <property type="molecule type" value="mRNA"/>
</dbReference>
<dbReference type="GO" id="GO:0005576">
    <property type="term" value="C:extracellular region"/>
    <property type="evidence" value="ECO:0007669"/>
    <property type="project" value="UniProtKB-SubCell"/>
</dbReference>
<dbReference type="GO" id="GO:0035792">
    <property type="term" value="C:host cell postsynaptic membrane"/>
    <property type="evidence" value="ECO:0007669"/>
    <property type="project" value="UniProtKB-KW"/>
</dbReference>
<dbReference type="GO" id="GO:0042151">
    <property type="term" value="C:nematocyst"/>
    <property type="evidence" value="ECO:0007669"/>
    <property type="project" value="UniProtKB-SubCell"/>
</dbReference>
<dbReference type="GO" id="GO:0030550">
    <property type="term" value="F:acetylcholine receptor inhibitor activity"/>
    <property type="evidence" value="ECO:0007669"/>
    <property type="project" value="UniProtKB-KW"/>
</dbReference>
<dbReference type="GO" id="GO:0008200">
    <property type="term" value="F:ion channel inhibitor activity"/>
    <property type="evidence" value="ECO:0007669"/>
    <property type="project" value="InterPro"/>
</dbReference>
<dbReference type="GO" id="GO:0090729">
    <property type="term" value="F:toxin activity"/>
    <property type="evidence" value="ECO:0007669"/>
    <property type="project" value="UniProtKB-KW"/>
</dbReference>
<dbReference type="InterPro" id="IPR004214">
    <property type="entry name" value="Conotoxin"/>
</dbReference>
<dbReference type="Pfam" id="PF02950">
    <property type="entry name" value="Conotoxin"/>
    <property type="match status" value="1"/>
</dbReference>
<accession>P0DRC3</accession>
<keyword id="KW-0008">Acetylcholine receptor inhibiting toxin</keyword>
<keyword id="KW-0027">Amidation</keyword>
<keyword id="KW-0165">Cleavage on pair of basic residues</keyword>
<keyword id="KW-0903">Direct protein sequencing</keyword>
<keyword id="KW-1015">Disulfide bond</keyword>
<keyword id="KW-0960">Knottin</keyword>
<keyword id="KW-0166">Nematocyst</keyword>
<keyword id="KW-0528">Neurotoxin</keyword>
<keyword id="KW-0629">Postsynaptic neurotoxin</keyword>
<keyword id="KW-0964">Secreted</keyword>
<keyword id="KW-0732">Signal</keyword>
<keyword id="KW-0800">Toxin</keyword>
<reference key="1">
    <citation type="journal article" date="2022" name="Toxins">
        <title>Peptides from the sea anemone Metridium senile with modified inhibitor cystine knot (ICK) fold inhibit nicotinic acetylcholine receptors.</title>
        <authorList>
            <person name="Kasheverov I.E."/>
            <person name="Logashina Y.A."/>
            <person name="Kornilov F.D."/>
            <person name="Lushpa V.A."/>
            <person name="Maleeva E.E."/>
            <person name="Korolkova Y.V."/>
            <person name="Yu J."/>
            <person name="Zhu X."/>
            <person name="Zhangsun D."/>
            <person name="Luo S."/>
            <person name="Stensvaag K."/>
            <person name="Kudryavtsev D.S."/>
            <person name="Mineev K.S."/>
            <person name="Andreev Y.A."/>
        </authorList>
    </citation>
    <scope>NUCLEOTIDE SEQUENCE [MRNA]</scope>
    <scope>PROTEIN SEQUENCE OF 47-70</scope>
    <scope>MASS SPECTROMETRY</scope>
    <scope>RECOMBINANT EXPRESSION</scope>
    <scope>PROBABLE AMIDATION AT TYR-78</scope>
    <source>
        <tissue>Tentacle</tissue>
    </source>
</reference>
<organism>
    <name type="scientific">Metridium senile</name>
    <name type="common">Brown sea anemone</name>
    <name type="synonym">Frilled sea anemone</name>
    <dbReference type="NCBI Taxonomy" id="6116"/>
    <lineage>
        <taxon>Eukaryota</taxon>
        <taxon>Metazoa</taxon>
        <taxon>Cnidaria</taxon>
        <taxon>Anthozoa</taxon>
        <taxon>Hexacorallia</taxon>
        <taxon>Actiniaria</taxon>
        <taxon>Nynantheae</taxon>
        <taxon>Metridiidae</taxon>
        <taxon>Metridium</taxon>
    </lineage>
</organism>
<name>AITX4_METSE</name>
<protein>
    <recommendedName>
        <fullName evidence="5">Alpha-actitoxin-Ms11a-4</fullName>
        <shortName evidence="5">Alpha-AITX-Ms11a-4</shortName>
    </recommendedName>
    <alternativeName>
        <fullName evidence="3">Alpha-anmTX-Ms11a-4</fullName>
    </alternativeName>
</protein>
<sequence length="79" mass="8715">MKVLVAVLVFALLMCMFVDIAESRRRDNPEYPSGLRYDEEMGVFKRCAQTGGTCSKSKDCCIVTAICSTATSPKTCFYG</sequence>
<feature type="signal peptide" evidence="1">
    <location>
        <begin position="1"/>
        <end position="23"/>
    </location>
</feature>
<feature type="propeptide" id="PRO_0000459530" evidence="5">
    <location>
        <begin position="24"/>
        <end position="46"/>
    </location>
</feature>
<feature type="chain" id="PRO_0000459531" description="Alpha-actitoxin-Ms11a-4">
    <location>
        <begin position="47"/>
        <end position="78"/>
    </location>
</feature>
<feature type="modified residue" description="Tyrosine amide" evidence="5">
    <location>
        <position position="78"/>
    </location>
</feature>
<feature type="disulfide bond" evidence="5">
    <location>
        <begin position="47"/>
        <end position="61"/>
    </location>
</feature>
<feature type="disulfide bond" evidence="5">
    <location>
        <begin position="54"/>
        <end position="67"/>
    </location>
</feature>
<feature type="disulfide bond" evidence="5">
    <location>
        <begin position="60"/>
        <end position="76"/>
    </location>
</feature>
<proteinExistence type="evidence at protein level"/>